<feature type="chain" id="PRO_0000051942" description="Steroid 17-alpha-hydroxylase/17,20 lyase">
    <location>
        <begin position="1"/>
        <end position="509"/>
    </location>
</feature>
<feature type="binding site" evidence="2">
    <location>
        <position position="202"/>
    </location>
    <ligand>
        <name>substrate</name>
    </ligand>
</feature>
<feature type="binding site" description="axial binding residue" evidence="1">
    <location>
        <position position="442"/>
    </location>
    <ligand>
        <name>heme</name>
        <dbReference type="ChEBI" id="CHEBI:30413"/>
    </ligand>
    <ligandPart>
        <name>Fe</name>
        <dbReference type="ChEBI" id="CHEBI:18248"/>
    </ligandPart>
</feature>
<feature type="sequence conflict" description="In Ref. 1; AAA63517." evidence="3" ref="1">
    <original>G</original>
    <variation>S</variation>
    <location>
        <position position="210"/>
    </location>
</feature>
<feature type="sequence conflict" description="In Ref. 1; AAA63517." evidence="3" ref="1">
    <original>N</original>
    <variation>Y</variation>
    <location>
        <position position="464"/>
    </location>
</feature>
<sequence length="509" mass="57308">MWVLLAVFLLTLAYLFWPKTKHSGAKYPRSLPSLPLVGSLPFLPRRGQQHENFFKLQEKYGPIYSFRLGSKTTVMIGHHQLAREVLLKKGKEFSGRPKVATLDILSDNQKGIAFADHGAHWQLHRKLVLNAFALFKDGNLKLEKIINQEANVLCDFLATQHGQSIDLSEPLSLAVTNIISFICFNFSFKNEDPALKAIQNVNDGILEVLGKEVLLDIFPALKIFPSKAMEKMKGCVETRNELLSEILEKCQENFTSDSITNLLHILMQAKVNADNNNTGPEQDSKLLSNRHMLATIADIFGAGVETTTSVIKWIVAYLLHHPSLKKRIQDSIDQNIGFNRTPTISDRNRLVLLEATIREVLRIRPVAPMLIPHKAIIDSSIGDLTIDKGTDVVVNLWALHHNEKEWQQPDLFMPERFLDPTGTQLISPSLSYLPFGAGPRSCVGEMLARQELFLFMSRLLQRFNLEIPDDGKLPSLEGNPSLVLQIKPFKVKIEVRQAWKEAQAEGSTS</sequence>
<keyword id="KW-0256">Endoplasmic reticulum</keyword>
<keyword id="KW-0349">Heme</keyword>
<keyword id="KW-0408">Iron</keyword>
<keyword id="KW-0443">Lipid metabolism</keyword>
<keyword id="KW-0456">Lyase</keyword>
<keyword id="KW-0472">Membrane</keyword>
<keyword id="KW-0479">Metal-binding</keyword>
<keyword id="KW-0492">Microsome</keyword>
<keyword id="KW-0503">Monooxygenase</keyword>
<keyword id="KW-0560">Oxidoreductase</keyword>
<keyword id="KW-1185">Reference proteome</keyword>
<keyword id="KW-0755">Steroidogenesis</keyword>
<evidence type="ECO:0000250" key="1"/>
<evidence type="ECO:0000250" key="2">
    <source>
        <dbReference type="UniProtKB" id="P05093"/>
    </source>
</evidence>
<evidence type="ECO:0000305" key="3"/>
<name>CP17A_SHEEP</name>
<organism>
    <name type="scientific">Ovis aries</name>
    <name type="common">Sheep</name>
    <dbReference type="NCBI Taxonomy" id="9940"/>
    <lineage>
        <taxon>Eukaryota</taxon>
        <taxon>Metazoa</taxon>
        <taxon>Chordata</taxon>
        <taxon>Craniata</taxon>
        <taxon>Vertebrata</taxon>
        <taxon>Euteleostomi</taxon>
        <taxon>Mammalia</taxon>
        <taxon>Eutheria</taxon>
        <taxon>Laurasiatheria</taxon>
        <taxon>Artiodactyla</taxon>
        <taxon>Ruminantia</taxon>
        <taxon>Pecora</taxon>
        <taxon>Bovidae</taxon>
        <taxon>Caprinae</taxon>
        <taxon>Ovis</taxon>
    </lineage>
</organism>
<proteinExistence type="evidence at transcript level"/>
<gene>
    <name type="primary">CYP17A1</name>
    <name type="synonym">CYP17</name>
</gene>
<protein>
    <recommendedName>
        <fullName>Steroid 17-alpha-hydroxylase/17,20 lyase</fullName>
        <ecNumber evidence="2">1.14.14.19</ecNumber>
    </recommendedName>
    <alternativeName>
        <fullName>17-alpha-hydroxyprogesterone aldolase</fullName>
        <ecNumber evidence="2">1.14.14.32</ecNumber>
    </alternativeName>
    <alternativeName>
        <fullName>CYPXVII</fullName>
    </alternativeName>
    <alternativeName>
        <fullName>Cytochrome P450 17A1</fullName>
    </alternativeName>
    <alternativeName>
        <fullName>Cytochrome P450-C17</fullName>
        <shortName>Cytochrome P450c17</shortName>
    </alternativeName>
    <alternativeName>
        <fullName>Steroid 17-alpha-monooxygenase</fullName>
    </alternativeName>
</protein>
<dbReference type="EC" id="1.14.14.19" evidence="2"/>
<dbReference type="EC" id="1.14.14.32" evidence="2"/>
<dbReference type="EMBL" id="L40335">
    <property type="protein sequence ID" value="AAA63517.1"/>
    <property type="molecule type" value="mRNA"/>
</dbReference>
<dbReference type="EMBL" id="AF251388">
    <property type="protein sequence ID" value="AAF65824.1"/>
    <property type="molecule type" value="mRNA"/>
</dbReference>
<dbReference type="RefSeq" id="NP_001009483.1">
    <property type="nucleotide sequence ID" value="NM_001009483.1"/>
</dbReference>
<dbReference type="SMR" id="Q29497"/>
<dbReference type="STRING" id="9940.ENSOARP00000002254"/>
<dbReference type="PaxDb" id="9940-ENSOARP00000002254"/>
<dbReference type="Ensembl" id="ENSOART00020011415">
    <property type="protein sequence ID" value="ENSOARP00020009371"/>
    <property type="gene ID" value="ENSOARG00020007273"/>
</dbReference>
<dbReference type="Ensembl" id="ENSOART00040023533">
    <property type="protein sequence ID" value="ENSOARP00040011835"/>
    <property type="gene ID" value="ENSOARG00040014282"/>
</dbReference>
<dbReference type="Ensembl" id="ENSOART00180054963">
    <property type="protein sequence ID" value="ENSOARP00180029052"/>
    <property type="gene ID" value="ENSOARG00180032766"/>
</dbReference>
<dbReference type="Ensembl" id="ENSOART00220044003">
    <property type="protein sequence ID" value="ENSOARP00220023790"/>
    <property type="gene ID" value="ENSOARG00220026318"/>
</dbReference>
<dbReference type="Ensembl" id="ENSOART00225044787">
    <property type="protein sequence ID" value="ENSOARP00225021887"/>
    <property type="gene ID" value="ENSOARG00225027326"/>
</dbReference>
<dbReference type="GeneID" id="493968"/>
<dbReference type="KEGG" id="oas:493968"/>
<dbReference type="CTD" id="1586"/>
<dbReference type="eggNOG" id="KOG0156">
    <property type="taxonomic scope" value="Eukaryota"/>
</dbReference>
<dbReference type="OrthoDB" id="1470350at2759"/>
<dbReference type="BRENDA" id="1.14.14.19">
    <property type="organism ID" value="2668"/>
</dbReference>
<dbReference type="UniPathway" id="UPA00788"/>
<dbReference type="Proteomes" id="UP000002356">
    <property type="component" value="Unplaced"/>
</dbReference>
<dbReference type="GO" id="GO:0005789">
    <property type="term" value="C:endoplasmic reticulum membrane"/>
    <property type="evidence" value="ECO:0007669"/>
    <property type="project" value="UniProtKB-SubCell"/>
</dbReference>
<dbReference type="GO" id="GO:0020037">
    <property type="term" value="F:heme binding"/>
    <property type="evidence" value="ECO:0000250"/>
    <property type="project" value="UniProtKB"/>
</dbReference>
<dbReference type="GO" id="GO:0005506">
    <property type="term" value="F:iron ion binding"/>
    <property type="evidence" value="ECO:0007669"/>
    <property type="project" value="InterPro"/>
</dbReference>
<dbReference type="GO" id="GO:0016829">
    <property type="term" value="F:lyase activity"/>
    <property type="evidence" value="ECO:0007669"/>
    <property type="project" value="UniProtKB-KW"/>
</dbReference>
<dbReference type="GO" id="GO:0004508">
    <property type="term" value="F:steroid 17-alpha-monooxygenase activity"/>
    <property type="evidence" value="ECO:0000250"/>
    <property type="project" value="UniProtKB"/>
</dbReference>
<dbReference type="GO" id="GO:0006704">
    <property type="term" value="P:glucocorticoid biosynthetic process"/>
    <property type="evidence" value="ECO:0007669"/>
    <property type="project" value="UniProtKB-UniPathway"/>
</dbReference>
<dbReference type="GO" id="GO:0042446">
    <property type="term" value="P:hormone biosynthetic process"/>
    <property type="evidence" value="ECO:0000250"/>
    <property type="project" value="UniProtKB"/>
</dbReference>
<dbReference type="GO" id="GO:0042448">
    <property type="term" value="P:progesterone metabolic process"/>
    <property type="evidence" value="ECO:0000250"/>
    <property type="project" value="UniProtKB"/>
</dbReference>
<dbReference type="GO" id="GO:0008202">
    <property type="term" value="P:steroid metabolic process"/>
    <property type="evidence" value="ECO:0000250"/>
    <property type="project" value="UniProtKB"/>
</dbReference>
<dbReference type="CDD" id="cd20673">
    <property type="entry name" value="CYP17A1"/>
    <property type="match status" value="1"/>
</dbReference>
<dbReference type="FunFam" id="1.10.630.10:FF:000002">
    <property type="entry name" value="Cytochrome P450 1A1"/>
    <property type="match status" value="1"/>
</dbReference>
<dbReference type="Gene3D" id="1.10.630.10">
    <property type="entry name" value="Cytochrome P450"/>
    <property type="match status" value="1"/>
</dbReference>
<dbReference type="InterPro" id="IPR001128">
    <property type="entry name" value="Cyt_P450"/>
</dbReference>
<dbReference type="InterPro" id="IPR017972">
    <property type="entry name" value="Cyt_P450_CS"/>
</dbReference>
<dbReference type="InterPro" id="IPR002401">
    <property type="entry name" value="Cyt_P450_E_grp-I"/>
</dbReference>
<dbReference type="InterPro" id="IPR036396">
    <property type="entry name" value="Cyt_P450_sf"/>
</dbReference>
<dbReference type="PANTHER" id="PTHR24289">
    <property type="entry name" value="STEROID 17-ALPHA-HYDROXYLASE/17,20 LYASE"/>
    <property type="match status" value="1"/>
</dbReference>
<dbReference type="PANTHER" id="PTHR24289:SF13">
    <property type="entry name" value="STEROID 17-ALPHA-HYDROXYLASE_17,20 LYASE"/>
    <property type="match status" value="1"/>
</dbReference>
<dbReference type="Pfam" id="PF00067">
    <property type="entry name" value="p450"/>
    <property type="match status" value="1"/>
</dbReference>
<dbReference type="PRINTS" id="PR00463">
    <property type="entry name" value="EP450I"/>
</dbReference>
<dbReference type="PRINTS" id="PR00385">
    <property type="entry name" value="P450"/>
</dbReference>
<dbReference type="SUPFAM" id="SSF48264">
    <property type="entry name" value="Cytochrome P450"/>
    <property type="match status" value="1"/>
</dbReference>
<dbReference type="PROSITE" id="PS00086">
    <property type="entry name" value="CYTOCHROME_P450"/>
    <property type="match status" value="1"/>
</dbReference>
<reference key="1">
    <citation type="submission" date="1995-03" db="EMBL/GenBank/DDBJ databases">
        <title>Cloning and expression of ovine cytochrome P-450 17-alpha hydroxylase/c17-20 lyase.</title>
        <authorList>
            <person name="Murry B.A."/>
            <person name="Swart P."/>
            <person name="Mason J.I."/>
        </authorList>
    </citation>
    <scope>NUCLEOTIDE SEQUENCE [MRNA]</scope>
    <source>
        <tissue>Adrenal cortex</tissue>
    </source>
</reference>
<reference key="2">
    <citation type="journal article" date="2003" name="Biochemistry (Mosc.)">
        <title>Molecular cloning and heterologous expression in E. coli of cytochrome P45017alpha. Comparison of structural and functional properties of substrate-specific cytochromes P450 from different species.</title>
        <authorList>
            <person name="Gilep A.A."/>
            <person name="Estabrook R.W."/>
            <person name="Usanov S.A."/>
        </authorList>
    </citation>
    <scope>NUCLEOTIDE SEQUENCE [MRNA]</scope>
    <source>
        <tissue>Adrenal gland</tissue>
    </source>
</reference>
<comment type="function">
    <text evidence="2">A cytochrome P450 monooxygenase involved in corticoid and androgen biosynthesis. Catalyzes 17-alpha hydroxylation of C21 steroids, which is common for both pathways. A second oxidative step, required only for androgen synthesis, involves an acyl-carbon cleavage. The 17-alpha hydroxy intermediates, as part of adrenal glucocorticoids biosynthesis pathway, are precursors of cortisol. Hydroxylates steroid hormones, pregnenolone and progesterone to form 17-alpha hydroxy metabolites, followed by the cleavage of the C17-C20 bond to form C19 steroids, dehydroepiandrosterone (DHEA) and androstenedione. Has 16-alpha hydroxylase activity. Catalyzes 16-alpha hydroxylation of 17-alpha hydroxy pregnenolone, followed by the cleavage of the C17-C20 bond to form 16-alpha-hydroxy DHEA. Also 16-alpha hydroxylates androgens, relevant for estriol synthesis. Mechanistically, uses molecular oxygen inserting one oxygen atom into a substrate, and reducing the second into a water molecule, with two electrons provided by NADPH via cytochrome P450 reductase (CPR; NADPH-ferrihemoprotein reductase).</text>
</comment>
<comment type="catalytic activity">
    <reaction evidence="2">
        <text>a C21-steroid + reduced [NADPH--hemoprotein reductase] + O2 = a 17alpha-hydroxy-C21-steroid + oxidized [NADPH--hemoprotein reductase] + H2O + H(+)</text>
        <dbReference type="Rhea" id="RHEA:65760"/>
        <dbReference type="Rhea" id="RHEA-COMP:11964"/>
        <dbReference type="Rhea" id="RHEA-COMP:11965"/>
        <dbReference type="ChEBI" id="CHEBI:15377"/>
        <dbReference type="ChEBI" id="CHEBI:15378"/>
        <dbReference type="ChEBI" id="CHEBI:15379"/>
        <dbReference type="ChEBI" id="CHEBI:57618"/>
        <dbReference type="ChEBI" id="CHEBI:58210"/>
        <dbReference type="ChEBI" id="CHEBI:61313"/>
        <dbReference type="ChEBI" id="CHEBI:138141"/>
        <dbReference type="EC" id="1.14.14.19"/>
    </reaction>
    <physiologicalReaction direction="left-to-right" evidence="2">
        <dbReference type="Rhea" id="RHEA:65761"/>
    </physiologicalReaction>
</comment>
<comment type="catalytic activity">
    <reaction evidence="2">
        <text>progesterone + reduced [NADPH--hemoprotein reductase] + O2 = 17alpha-hydroxyprogesterone + oxidized [NADPH--hemoprotein reductase] + H2O + H(+)</text>
        <dbReference type="Rhea" id="RHEA:46308"/>
        <dbReference type="Rhea" id="RHEA-COMP:11964"/>
        <dbReference type="Rhea" id="RHEA-COMP:11965"/>
        <dbReference type="ChEBI" id="CHEBI:15377"/>
        <dbReference type="ChEBI" id="CHEBI:15378"/>
        <dbReference type="ChEBI" id="CHEBI:15379"/>
        <dbReference type="ChEBI" id="CHEBI:17026"/>
        <dbReference type="ChEBI" id="CHEBI:17252"/>
        <dbReference type="ChEBI" id="CHEBI:57618"/>
        <dbReference type="ChEBI" id="CHEBI:58210"/>
        <dbReference type="EC" id="1.14.14.19"/>
    </reaction>
    <physiologicalReaction direction="left-to-right" evidence="2">
        <dbReference type="Rhea" id="RHEA:46309"/>
    </physiologicalReaction>
</comment>
<comment type="catalytic activity">
    <reaction evidence="2">
        <text>pregnenolone + reduced [NADPH--hemoprotein reductase] + O2 = 17alpha-hydroxypregnenolone + oxidized [NADPH--hemoprotein reductase] + H2O + H(+)</text>
        <dbReference type="Rhea" id="RHEA:50236"/>
        <dbReference type="Rhea" id="RHEA-COMP:11964"/>
        <dbReference type="Rhea" id="RHEA-COMP:11965"/>
        <dbReference type="ChEBI" id="CHEBI:15377"/>
        <dbReference type="ChEBI" id="CHEBI:15378"/>
        <dbReference type="ChEBI" id="CHEBI:15379"/>
        <dbReference type="ChEBI" id="CHEBI:16581"/>
        <dbReference type="ChEBI" id="CHEBI:28750"/>
        <dbReference type="ChEBI" id="CHEBI:57618"/>
        <dbReference type="ChEBI" id="CHEBI:58210"/>
        <dbReference type="EC" id="1.14.14.19"/>
    </reaction>
    <physiologicalReaction direction="left-to-right" evidence="2">
        <dbReference type="Rhea" id="RHEA:50237"/>
    </physiologicalReaction>
</comment>
<comment type="catalytic activity">
    <reaction evidence="2">
        <text>17alpha-hydroxyprogesterone + reduced [NADPH--hemoprotein reductase] + O2 = androst-4-ene-3,17-dione + acetate + oxidized [NADPH--hemoprotein reductase] + H2O + 2 H(+)</text>
        <dbReference type="Rhea" id="RHEA:14753"/>
        <dbReference type="Rhea" id="RHEA-COMP:11964"/>
        <dbReference type="Rhea" id="RHEA-COMP:11965"/>
        <dbReference type="ChEBI" id="CHEBI:15377"/>
        <dbReference type="ChEBI" id="CHEBI:15378"/>
        <dbReference type="ChEBI" id="CHEBI:15379"/>
        <dbReference type="ChEBI" id="CHEBI:16422"/>
        <dbReference type="ChEBI" id="CHEBI:17252"/>
        <dbReference type="ChEBI" id="CHEBI:30089"/>
        <dbReference type="ChEBI" id="CHEBI:57618"/>
        <dbReference type="ChEBI" id="CHEBI:58210"/>
        <dbReference type="EC" id="1.14.14.32"/>
    </reaction>
    <physiologicalReaction direction="left-to-right" evidence="2">
        <dbReference type="Rhea" id="RHEA:14754"/>
    </physiologicalReaction>
</comment>
<comment type="catalytic activity">
    <reaction evidence="2">
        <text>17alpha-hydroxyprogesterone + reduced [NADPH--hemoprotein reductase] + O2 = 16alpha,17alpha-dihydroxyprogesterone + oxidized [NADPH--hemoprotein reductase] + H2O + H(+)</text>
        <dbReference type="Rhea" id="RHEA:53216"/>
        <dbReference type="Rhea" id="RHEA-COMP:11964"/>
        <dbReference type="Rhea" id="RHEA-COMP:11965"/>
        <dbReference type="ChEBI" id="CHEBI:763"/>
        <dbReference type="ChEBI" id="CHEBI:15377"/>
        <dbReference type="ChEBI" id="CHEBI:15378"/>
        <dbReference type="ChEBI" id="CHEBI:15379"/>
        <dbReference type="ChEBI" id="CHEBI:17252"/>
        <dbReference type="ChEBI" id="CHEBI:57618"/>
        <dbReference type="ChEBI" id="CHEBI:58210"/>
    </reaction>
    <physiologicalReaction direction="left-to-right" evidence="2">
        <dbReference type="Rhea" id="RHEA:53217"/>
    </physiologicalReaction>
</comment>
<comment type="catalytic activity">
    <reaction evidence="2">
        <text>16alpha,17alpha-dihydroxyprogesterone + reduced [NADPH--hemoprotein reductase] + O2 = 6beta,16alpha,17alpha-trihydroxyprogesterone + oxidized [NADPH--hemoprotein reductase] + H2O + H(+)</text>
        <dbReference type="Rhea" id="RHEA:53220"/>
        <dbReference type="Rhea" id="RHEA-COMP:11964"/>
        <dbReference type="Rhea" id="RHEA-COMP:11965"/>
        <dbReference type="ChEBI" id="CHEBI:763"/>
        <dbReference type="ChEBI" id="CHEBI:15377"/>
        <dbReference type="ChEBI" id="CHEBI:15378"/>
        <dbReference type="ChEBI" id="CHEBI:15379"/>
        <dbReference type="ChEBI" id="CHEBI:57618"/>
        <dbReference type="ChEBI" id="CHEBI:58210"/>
        <dbReference type="ChEBI" id="CHEBI:137046"/>
    </reaction>
    <physiologicalReaction direction="left-to-right" evidence="2">
        <dbReference type="Rhea" id="RHEA:53221"/>
    </physiologicalReaction>
</comment>
<comment type="catalytic activity">
    <reaction evidence="2">
        <text>17alpha-hydroxypregnenolone + reduced [NADPH--hemoprotein reductase] + O2 = 3beta-hydroxyandrost-5-en-17-one + acetate + oxidized [NADPH--hemoprotein reductase] + H2O + 2 H(+)</text>
        <dbReference type="Rhea" id="RHEA:50244"/>
        <dbReference type="Rhea" id="RHEA-COMP:11964"/>
        <dbReference type="Rhea" id="RHEA-COMP:11965"/>
        <dbReference type="ChEBI" id="CHEBI:15377"/>
        <dbReference type="ChEBI" id="CHEBI:15378"/>
        <dbReference type="ChEBI" id="CHEBI:15379"/>
        <dbReference type="ChEBI" id="CHEBI:28689"/>
        <dbReference type="ChEBI" id="CHEBI:28750"/>
        <dbReference type="ChEBI" id="CHEBI:30089"/>
        <dbReference type="ChEBI" id="CHEBI:57618"/>
        <dbReference type="ChEBI" id="CHEBI:58210"/>
        <dbReference type="EC" id="1.14.14.32"/>
    </reaction>
    <physiologicalReaction direction="left-to-right" evidence="2">
        <dbReference type="Rhea" id="RHEA:50245"/>
    </physiologicalReaction>
</comment>
<comment type="catalytic activity">
    <reaction evidence="2">
        <text>16alpha,17alpha-dihydroxypregnenolone + reduced [NADPH--hemoprotein reductase] + O2 = 3beta,16alpha-dihydroxy-androst-5-en-17-one + acetate + oxidized [NADPH--hemoprotein reductase] + H2O + 2 H(+)</text>
        <dbReference type="Rhea" id="RHEA:53224"/>
        <dbReference type="Rhea" id="RHEA-COMP:11964"/>
        <dbReference type="Rhea" id="RHEA-COMP:11965"/>
        <dbReference type="ChEBI" id="CHEBI:15377"/>
        <dbReference type="ChEBI" id="CHEBI:15378"/>
        <dbReference type="ChEBI" id="CHEBI:15379"/>
        <dbReference type="ChEBI" id="CHEBI:27771"/>
        <dbReference type="ChEBI" id="CHEBI:30089"/>
        <dbReference type="ChEBI" id="CHEBI:57618"/>
        <dbReference type="ChEBI" id="CHEBI:58210"/>
        <dbReference type="ChEBI" id="CHEBI:137049"/>
    </reaction>
    <physiologicalReaction direction="left-to-right" evidence="2">
        <dbReference type="Rhea" id="RHEA:53225"/>
    </physiologicalReaction>
</comment>
<comment type="catalytic activity">
    <reaction evidence="2">
        <text>3beta-hydroxyandrost-5-en-17-one + reduced [NADPH--hemoprotein reductase] + O2 = 3beta,16alpha-dihydroxy-androst-5-en-17-one + oxidized [NADPH--hemoprotein reductase] + H2O + H(+)</text>
        <dbReference type="Rhea" id="RHEA:47220"/>
        <dbReference type="Rhea" id="RHEA-COMP:11964"/>
        <dbReference type="Rhea" id="RHEA-COMP:11965"/>
        <dbReference type="ChEBI" id="CHEBI:15377"/>
        <dbReference type="ChEBI" id="CHEBI:15378"/>
        <dbReference type="ChEBI" id="CHEBI:15379"/>
        <dbReference type="ChEBI" id="CHEBI:27771"/>
        <dbReference type="ChEBI" id="CHEBI:28689"/>
        <dbReference type="ChEBI" id="CHEBI:57618"/>
        <dbReference type="ChEBI" id="CHEBI:58210"/>
    </reaction>
    <physiologicalReaction direction="left-to-right" evidence="2">
        <dbReference type="Rhea" id="RHEA:47221"/>
    </physiologicalReaction>
</comment>
<comment type="catalytic activity">
    <reaction evidence="2">
        <text>androst-4-ene-3,17-dione + reduced [NADPH--hemoprotein reductase] + O2 = 16alpha-hydroxyandrost-4-ene-3,17-dione + oxidized [NADPH--hemoprotein reductase] + H2O + H(+)</text>
        <dbReference type="Rhea" id="RHEA:53228"/>
        <dbReference type="Rhea" id="RHEA-COMP:11964"/>
        <dbReference type="Rhea" id="RHEA-COMP:11965"/>
        <dbReference type="ChEBI" id="CHEBI:15377"/>
        <dbReference type="ChEBI" id="CHEBI:15378"/>
        <dbReference type="ChEBI" id="CHEBI:15379"/>
        <dbReference type="ChEBI" id="CHEBI:16422"/>
        <dbReference type="ChEBI" id="CHEBI:27582"/>
        <dbReference type="ChEBI" id="CHEBI:57618"/>
        <dbReference type="ChEBI" id="CHEBI:58210"/>
    </reaction>
    <physiologicalReaction direction="left-to-right" evidence="2">
        <dbReference type="Rhea" id="RHEA:53229"/>
    </physiologicalReaction>
</comment>
<comment type="cofactor">
    <cofactor evidence="2">
        <name>heme</name>
        <dbReference type="ChEBI" id="CHEBI:30413"/>
    </cofactor>
</comment>
<comment type="activity regulation">
    <text evidence="2">Regulated predominantly by intracellular cAMP levels. The 17,20-lyase activity is stimulated by cytochrome b5, which acts as an allosteric effector increasing the Vmax of the lyase activity.</text>
</comment>
<comment type="pathway">
    <text evidence="2">Steroid hormone biosynthesis.</text>
</comment>
<comment type="pathway">
    <text evidence="2">Steroid biosynthesis; glucocorticoid biosynthesis.</text>
</comment>
<comment type="subcellular location">
    <subcellularLocation>
        <location evidence="2">Endoplasmic reticulum membrane</location>
    </subcellularLocation>
    <subcellularLocation>
        <location evidence="2">Microsome membrane</location>
    </subcellularLocation>
</comment>
<comment type="similarity">
    <text evidence="3">Belongs to the cytochrome P450 family.</text>
</comment>
<accession>Q29497</accession>
<accession>Q9N0U6</accession>